<sequence length="367" mass="40778">MKPFLRSQLERYAQRLQELDFLLSREDIMADMQQYRSISREHAEVTQVAGRYARYQQREADLAGAREMLEDPDMAEMAQEEIHAAETELVQLEDELQRLLLPKDPDDERNAFIEIRAGTGGDESALFAGDLARMYTRYAATVGWKVEVMSANESEIGGYKEVVLRIEGQSGTGPSGSGVYGALKFESGGHRVQRVPATETQGRIHTSACTVAVMPEPDEHQAITLNPADLRIDTFRASGAGGQHINKTDSAVRVVHLPTGIVAECQDGRSQHSNKAKALQVLQARIQEKERSERAAKEAALRKGLIGSGDRSDRIRTYNFPQGRLTDHRINLTLYKLLAIMEGDLGEVLQALQHAREAELLAELGLE</sequence>
<accession>A1W4B8</accession>
<keyword id="KW-0963">Cytoplasm</keyword>
<keyword id="KW-0488">Methylation</keyword>
<keyword id="KW-0648">Protein biosynthesis</keyword>
<comment type="function">
    <text evidence="1">Peptide chain release factor 1 directs the termination of translation in response to the peptide chain termination codons UAG and UAA.</text>
</comment>
<comment type="subcellular location">
    <subcellularLocation>
        <location evidence="1">Cytoplasm</location>
    </subcellularLocation>
</comment>
<comment type="PTM">
    <text evidence="1">Methylated by PrmC. Methylation increases the termination efficiency of RF1.</text>
</comment>
<comment type="similarity">
    <text evidence="1">Belongs to the prokaryotic/mitochondrial release factor family.</text>
</comment>
<dbReference type="EMBL" id="CP000539">
    <property type="protein sequence ID" value="ABM41093.1"/>
    <property type="molecule type" value="Genomic_DNA"/>
</dbReference>
<dbReference type="SMR" id="A1W4B8"/>
<dbReference type="STRING" id="232721.Ajs_0851"/>
<dbReference type="KEGG" id="ajs:Ajs_0851"/>
<dbReference type="eggNOG" id="COG0216">
    <property type="taxonomic scope" value="Bacteria"/>
</dbReference>
<dbReference type="HOGENOM" id="CLU_036856_0_1_4"/>
<dbReference type="Proteomes" id="UP000000645">
    <property type="component" value="Chromosome"/>
</dbReference>
<dbReference type="GO" id="GO:0005737">
    <property type="term" value="C:cytoplasm"/>
    <property type="evidence" value="ECO:0007669"/>
    <property type="project" value="UniProtKB-SubCell"/>
</dbReference>
<dbReference type="GO" id="GO:0016149">
    <property type="term" value="F:translation release factor activity, codon specific"/>
    <property type="evidence" value="ECO:0007669"/>
    <property type="project" value="UniProtKB-UniRule"/>
</dbReference>
<dbReference type="FunFam" id="3.30.160.20:FF:000004">
    <property type="entry name" value="Peptide chain release factor 1"/>
    <property type="match status" value="1"/>
</dbReference>
<dbReference type="FunFam" id="3.30.70.1660:FF:000002">
    <property type="entry name" value="Peptide chain release factor 1"/>
    <property type="match status" value="1"/>
</dbReference>
<dbReference type="FunFam" id="3.30.70.1660:FF:000004">
    <property type="entry name" value="Peptide chain release factor 1"/>
    <property type="match status" value="1"/>
</dbReference>
<dbReference type="Gene3D" id="3.30.160.20">
    <property type="match status" value="1"/>
</dbReference>
<dbReference type="Gene3D" id="3.30.70.1660">
    <property type="match status" value="1"/>
</dbReference>
<dbReference type="Gene3D" id="6.10.140.1950">
    <property type="match status" value="1"/>
</dbReference>
<dbReference type="HAMAP" id="MF_00093">
    <property type="entry name" value="Rel_fac_1"/>
    <property type="match status" value="1"/>
</dbReference>
<dbReference type="InterPro" id="IPR005139">
    <property type="entry name" value="PCRF"/>
</dbReference>
<dbReference type="InterPro" id="IPR000352">
    <property type="entry name" value="Pep_chain_release_fac_I"/>
</dbReference>
<dbReference type="InterPro" id="IPR045853">
    <property type="entry name" value="Pep_chain_release_fac_I_sf"/>
</dbReference>
<dbReference type="InterPro" id="IPR050057">
    <property type="entry name" value="Prokaryotic/Mito_RF"/>
</dbReference>
<dbReference type="InterPro" id="IPR004373">
    <property type="entry name" value="RF-1"/>
</dbReference>
<dbReference type="NCBIfam" id="TIGR00019">
    <property type="entry name" value="prfA"/>
    <property type="match status" value="1"/>
</dbReference>
<dbReference type="NCBIfam" id="NF001859">
    <property type="entry name" value="PRK00591.1"/>
    <property type="match status" value="1"/>
</dbReference>
<dbReference type="PANTHER" id="PTHR43804">
    <property type="entry name" value="LD18447P"/>
    <property type="match status" value="1"/>
</dbReference>
<dbReference type="PANTHER" id="PTHR43804:SF7">
    <property type="entry name" value="LD18447P"/>
    <property type="match status" value="1"/>
</dbReference>
<dbReference type="Pfam" id="PF03462">
    <property type="entry name" value="PCRF"/>
    <property type="match status" value="1"/>
</dbReference>
<dbReference type="Pfam" id="PF00472">
    <property type="entry name" value="RF-1"/>
    <property type="match status" value="1"/>
</dbReference>
<dbReference type="SMART" id="SM00937">
    <property type="entry name" value="PCRF"/>
    <property type="match status" value="1"/>
</dbReference>
<dbReference type="SUPFAM" id="SSF75620">
    <property type="entry name" value="Release factor"/>
    <property type="match status" value="1"/>
</dbReference>
<dbReference type="PROSITE" id="PS00745">
    <property type="entry name" value="RF_PROK_I"/>
    <property type="match status" value="1"/>
</dbReference>
<gene>
    <name evidence="1" type="primary">prfA</name>
    <name type="ordered locus">Ajs_0851</name>
</gene>
<evidence type="ECO:0000255" key="1">
    <source>
        <dbReference type="HAMAP-Rule" id="MF_00093"/>
    </source>
</evidence>
<name>RF1_ACISJ</name>
<protein>
    <recommendedName>
        <fullName evidence="1">Peptide chain release factor 1</fullName>
        <shortName evidence="1">RF-1</shortName>
    </recommendedName>
</protein>
<reference key="1">
    <citation type="submission" date="2006-12" db="EMBL/GenBank/DDBJ databases">
        <title>Complete sequence of chromosome 1 of Acidovorax sp. JS42.</title>
        <authorList>
            <person name="Copeland A."/>
            <person name="Lucas S."/>
            <person name="Lapidus A."/>
            <person name="Barry K."/>
            <person name="Detter J.C."/>
            <person name="Glavina del Rio T."/>
            <person name="Dalin E."/>
            <person name="Tice H."/>
            <person name="Pitluck S."/>
            <person name="Chertkov O."/>
            <person name="Brettin T."/>
            <person name="Bruce D."/>
            <person name="Han C."/>
            <person name="Tapia R."/>
            <person name="Gilna P."/>
            <person name="Schmutz J."/>
            <person name="Larimer F."/>
            <person name="Land M."/>
            <person name="Hauser L."/>
            <person name="Kyrpides N."/>
            <person name="Kim E."/>
            <person name="Stahl D."/>
            <person name="Richardson P."/>
        </authorList>
    </citation>
    <scope>NUCLEOTIDE SEQUENCE [LARGE SCALE GENOMIC DNA]</scope>
    <source>
        <strain>JS42</strain>
    </source>
</reference>
<feature type="chain" id="PRO_1000004854" description="Peptide chain release factor 1">
    <location>
        <begin position="1"/>
        <end position="367"/>
    </location>
</feature>
<feature type="modified residue" description="N5-methylglutamine" evidence="1">
    <location>
        <position position="243"/>
    </location>
</feature>
<proteinExistence type="inferred from homology"/>
<organism>
    <name type="scientific">Acidovorax sp. (strain JS42)</name>
    <dbReference type="NCBI Taxonomy" id="232721"/>
    <lineage>
        <taxon>Bacteria</taxon>
        <taxon>Pseudomonadati</taxon>
        <taxon>Pseudomonadota</taxon>
        <taxon>Betaproteobacteria</taxon>
        <taxon>Burkholderiales</taxon>
        <taxon>Comamonadaceae</taxon>
        <taxon>Acidovorax</taxon>
    </lineage>
</organism>